<accession>Q8IEJ0</accession>
<gene>
    <name evidence="9" type="primary">CBP2</name>
    <name evidence="10" type="synonym">GEXP07</name>
    <name evidence="8" type="synonym">hyp8</name>
    <name evidence="11" type="ORF">MAL13P1.61</name>
    <name evidence="13" type="ORF">PF3D7_1301700</name>
</gene>
<feature type="signal peptide" evidence="2">
    <location>
        <begin position="1"/>
        <end position="25"/>
    </location>
</feature>
<feature type="chain" id="PRO_0000457118" description="CX3CL1-binding protein 2">
    <location>
        <begin position="26"/>
        <end position="245"/>
    </location>
</feature>
<feature type="topological domain" description="Cytoplasmic" evidence="12">
    <location>
        <begin position="26"/>
        <end position="164"/>
    </location>
</feature>
<feature type="transmembrane region" description="Helical" evidence="2">
    <location>
        <begin position="165"/>
        <end position="185"/>
    </location>
</feature>
<feature type="topological domain" description="Extracellular" evidence="5">
    <location>
        <begin position="186"/>
        <end position="196"/>
    </location>
</feature>
<feature type="transmembrane region" description="Helical" evidence="2">
    <location>
        <begin position="197"/>
        <end position="217"/>
    </location>
</feature>
<feature type="topological domain" description="Cytoplasmic" evidence="12">
    <location>
        <begin position="218"/>
        <end position="245"/>
    </location>
</feature>
<feature type="region of interest" description="PEXEL motif" evidence="12">
    <location>
        <begin position="46"/>
        <end position="50"/>
    </location>
</feature>
<feature type="region of interest" description="Disordered" evidence="3">
    <location>
        <begin position="52"/>
        <end position="71"/>
    </location>
</feature>
<organism evidence="14">
    <name type="scientific">Plasmodium falciparum (isolate 3D7)</name>
    <dbReference type="NCBI Taxonomy" id="36329"/>
    <lineage>
        <taxon>Eukaryota</taxon>
        <taxon>Sar</taxon>
        <taxon>Alveolata</taxon>
        <taxon>Apicomplexa</taxon>
        <taxon>Aconoidasida</taxon>
        <taxon>Haemosporida</taxon>
        <taxon>Plasmodiidae</taxon>
        <taxon>Plasmodium</taxon>
        <taxon>Plasmodium (Laverania)</taxon>
    </lineage>
</organism>
<keyword id="KW-0067">ATP-binding</keyword>
<keyword id="KW-1015">Disulfide bond</keyword>
<keyword id="KW-1032">Host cell membrane</keyword>
<keyword id="KW-1043">Host membrane</keyword>
<keyword id="KW-0472">Membrane</keyword>
<keyword id="KW-0547">Nucleotide-binding</keyword>
<keyword id="KW-1185">Reference proteome</keyword>
<keyword id="KW-0732">Signal</keyword>
<keyword id="KW-0812">Transmembrane</keyword>
<keyword id="KW-1133">Transmembrane helix</keyword>
<reference evidence="14" key="1">
    <citation type="journal article" date="2002" name="Nature">
        <title>Genome sequence of the human malaria parasite Plasmodium falciparum.</title>
        <authorList>
            <person name="Gardner M.J."/>
            <person name="Hall N."/>
            <person name="Fung E."/>
            <person name="White O."/>
            <person name="Berriman M."/>
            <person name="Hyman R.W."/>
            <person name="Carlton J.M."/>
            <person name="Pain A."/>
            <person name="Nelson K.E."/>
            <person name="Bowman S."/>
            <person name="Paulsen I.T."/>
            <person name="James K.D."/>
            <person name="Eisen J.A."/>
            <person name="Rutherford K.M."/>
            <person name="Salzberg S.L."/>
            <person name="Craig A."/>
            <person name="Kyes S."/>
            <person name="Chan M.-S."/>
            <person name="Nene V."/>
            <person name="Shallom S.J."/>
            <person name="Suh B."/>
            <person name="Peterson J."/>
            <person name="Angiuoli S."/>
            <person name="Pertea M."/>
            <person name="Allen J."/>
            <person name="Selengut J."/>
            <person name="Haft D."/>
            <person name="Mather M.W."/>
            <person name="Vaidya A.B."/>
            <person name="Martin D.M.A."/>
            <person name="Fairlamb A.H."/>
            <person name="Fraunholz M.J."/>
            <person name="Roos D.S."/>
            <person name="Ralph S.A."/>
            <person name="McFadden G.I."/>
            <person name="Cummings L.M."/>
            <person name="Subramanian G.M."/>
            <person name="Mungall C."/>
            <person name="Venter J.C."/>
            <person name="Carucci D.J."/>
            <person name="Hoffman S.L."/>
            <person name="Newbold C."/>
            <person name="Davis R.W."/>
            <person name="Fraser C.M."/>
            <person name="Barrell B.G."/>
        </authorList>
    </citation>
    <scope>NUCLEOTIDE SEQUENCE [LARGE SCALE GENOMIC DNA]</scope>
    <source>
        <strain evidence="14">3D7</strain>
    </source>
</reference>
<reference evidence="14" key="2">
    <citation type="journal article" date="2002" name="Nature">
        <title>Sequence of Plasmodium falciparum chromosomes 1, 3-9 and 13.</title>
        <authorList>
            <person name="Hall N."/>
            <person name="Pain A."/>
            <person name="Berriman M."/>
            <person name="Churcher C.M."/>
            <person name="Harris B."/>
            <person name="Harris D."/>
            <person name="Mungall K.L."/>
            <person name="Bowman S."/>
            <person name="Atkin R."/>
            <person name="Baker S."/>
            <person name="Barron A."/>
            <person name="Brooks K."/>
            <person name="Buckee C.O."/>
            <person name="Burrows C."/>
            <person name="Cherevach I."/>
            <person name="Chillingworth C."/>
            <person name="Chillingworth T."/>
            <person name="Christodoulou Z."/>
            <person name="Clark L."/>
            <person name="Clark R."/>
            <person name="Corton C."/>
            <person name="Cronin A."/>
            <person name="Davies R.M."/>
            <person name="Davis P."/>
            <person name="Dear P."/>
            <person name="Dearden F."/>
            <person name="Doggett J."/>
            <person name="Feltwell T."/>
            <person name="Goble A."/>
            <person name="Goodhead I."/>
            <person name="Gwilliam R."/>
            <person name="Hamlin N."/>
            <person name="Hance Z."/>
            <person name="Harper D."/>
            <person name="Hauser H."/>
            <person name="Hornsby T."/>
            <person name="Holroyd S."/>
            <person name="Horrocks P."/>
            <person name="Humphray S."/>
            <person name="Jagels K."/>
            <person name="James K.D."/>
            <person name="Johnson D."/>
            <person name="Kerhornou A."/>
            <person name="Knights A."/>
            <person name="Konfortov B."/>
            <person name="Kyes S."/>
            <person name="Larke N."/>
            <person name="Lawson D."/>
            <person name="Lennard N."/>
            <person name="Line A."/>
            <person name="Maddison M."/>
            <person name="Mclean J."/>
            <person name="Mooney P."/>
            <person name="Moule S."/>
            <person name="Murphy L."/>
            <person name="Oliver K."/>
            <person name="Ormond D."/>
            <person name="Price C."/>
            <person name="Quail M.A."/>
            <person name="Rabbinowitsch E."/>
            <person name="Rajandream M.A."/>
            <person name="Rutter S."/>
            <person name="Rutherford K.M."/>
            <person name="Sanders M."/>
            <person name="Simmonds M."/>
            <person name="Seeger K."/>
            <person name="Sharp S."/>
            <person name="Smith R."/>
            <person name="Squares R."/>
            <person name="Squares S."/>
            <person name="Stevens K."/>
            <person name="Taylor K."/>
            <person name="Tivey A."/>
            <person name="Unwin L."/>
            <person name="Whitehead S."/>
            <person name="Woodward J.R."/>
            <person name="Sulston J.E."/>
            <person name="Craig A."/>
            <person name="Newbold C."/>
            <person name="Barrell B.G."/>
        </authorList>
    </citation>
    <scope>NUCLEOTIDE SEQUENCE [LARGE SCALE GENOMIC DNA]</scope>
    <source>
        <strain evidence="14">3D7</strain>
    </source>
</reference>
<reference evidence="11" key="3">
    <citation type="journal article" date="2014" name="PLoS Biol.">
        <title>Inhibition of Plasmepsin V activity demonstrates its essential role in protein export, PfEMP1 display, and survival of malaria parasites.</title>
        <authorList>
            <person name="Sleebs B.E."/>
            <person name="Lopaticki S."/>
            <person name="Marapana D.S."/>
            <person name="O'Neill M.T."/>
            <person name="Rajasekaran P."/>
            <person name="Gazdik M."/>
            <person name="Guenther S."/>
            <person name="Whitehead L.W."/>
            <person name="Lowes K.N."/>
            <person name="Barfod L."/>
            <person name="Hviid L."/>
            <person name="Shaw P.J."/>
            <person name="Hodder A.N."/>
            <person name="Smith B.J."/>
            <person name="Cowman A.F."/>
            <person name="Boddey J.A."/>
        </authorList>
    </citation>
    <scope>SUBCELLULAR LOCATION</scope>
    <scope>DEVELOPMENTAL STAGE</scope>
</reference>
<reference evidence="11" key="4">
    <citation type="journal article" date="2016" name="Sci. Rep.">
        <title>Plasmodium falciparum proteins involved in cytoadherence of infected erythrocytes to chemokine CX3CL1.</title>
        <authorList>
            <person name="Hermand P."/>
            <person name="Ciceron L."/>
            <person name="Pionneau C."/>
            <person name="Vaquero C."/>
            <person name="Combadiere C."/>
            <person name="Deterre P."/>
        </authorList>
    </citation>
    <scope>FUNCTION</scope>
    <scope>SUBUNIT</scope>
    <scope>INTERACTION WITH HUMAN CX3CL1</scope>
    <scope>SUBCELLULAR LOCATION</scope>
    <scope>DEVELOPMENTAL STAGE</scope>
    <scope>MOTIF</scope>
    <scope>IDENTIFICATION BY MASS SPECTROMETRY</scope>
    <scope>BIOTECHNOLOGY</scope>
    <scope>TOPOLOGY</scope>
</reference>
<reference evidence="11" key="5">
    <citation type="journal article" date="2019" name="Int. J. Biol. Macromol.">
        <title>CX3CL1 binding protein-2 (CBP2) of Plasmodium falciparum binds nucleic acids.</title>
        <authorList>
            <person name="Saxena R."/>
            <person name="Kaur J."/>
            <person name="Hora R."/>
            <person name="Singh P."/>
            <person name="Singh V."/>
            <person name="Mishra P.C."/>
        </authorList>
    </citation>
    <scope>SUBUNIT</scope>
    <scope>INTERACTION WITH SBP1</scope>
    <scope>DOMAIN</scope>
    <scope>DISULFIDE BOND</scope>
</reference>
<reference evidence="11" key="6">
    <citation type="journal article" date="2020" name="MBio">
        <title>Role of Plasmodium falciparum Protein GEXP07 in Maurer's Cleft Morphology, Knob Architecture, and P. falciparum EMP1 Trafficking.</title>
        <authorList>
            <person name="McHugh E."/>
            <person name="Carmo O.M.S."/>
            <person name="Blanch A."/>
            <person name="Looker O."/>
            <person name="Liu B."/>
            <person name="Tiash S."/>
            <person name="Andrew D."/>
            <person name="Batinovic S."/>
            <person name="Low A.J.Y."/>
            <person name="Cho H.J."/>
            <person name="McMillan P."/>
            <person name="Tilley L."/>
            <person name="Dixon M.W.A."/>
        </authorList>
    </citation>
    <scope>FUNCTION</scope>
    <scope>INTERACTION WITH MAHRP1</scope>
    <scope>SUBCELLULAR LOCATION</scope>
    <scope>DEVELOPMENTAL STAGE</scope>
    <scope>IDENTIFICATION BY MASS SPECTROMETRY</scope>
    <scope>DISRUPTION PHENOTYPE</scope>
</reference>
<sequence length="245" mass="28255">MSFCYVRTISIALFLFIFLFLNNGNFKNNFYRKDNKYSSIKIRSFRSLAENQKVETEQSTPAKPEPTEFVNNDIHQNKNTFKKLKNNEKKKEILEEKMKDFVKLYVNKSSGECQRYRLQQHLKNYSSSNEYKKFMNKFVKFLKVHNDLNALKSQLHFNNVRAATIIFIAGFLSIFAILLTISAVAATSKFTNNMLAIAGVGALGSALSLPGMALLFVPAMLYVLNRKNEITNHYSERIIKQVSNF</sequence>
<comment type="function">
    <text evidence="5 7">During the asexual blood stage and probably at the ring/trophozoite stages, plays a role in Maurer's cleft formation and/or morphology (PubMed:32184257). Also, involved in the loading of the virulence factor EMP1 into the Maurer's cleft membrane (PubMed:32184257). By binding to host chemokine CX3CL1, mediates the cytoadherence of host erythrocytes infected with parasite mature forms (late trophozoite and schizont) to endothelial cells, which sequesters them away from the circulation and thus prevents their elimination by the host spleen (PubMed:27653778).</text>
</comment>
<comment type="subunit">
    <text evidence="5 6 7">Monomer (PubMed:27653778, PubMed:31356937). May form (via the first cytoplasmic domain) homodimers or homotrimers; disulfide-linked (PubMed:27653778, PubMed:31356937). Interacts with MAHRP1 (PubMed:32184257). May interact (via first cytoplasmic domain) with SBP1; the interaction is likely to occur at the ring stage in the Maurer's clefts and is weaken by ATP (PubMed:31356937). Interacts (via extracellular domain) with human chemokine CX3CL1; the interaction mediates the adhesion of infected erythrocytes with endothelial cells (PubMed:27653778).</text>
</comment>
<comment type="subcellular location">
    <subcellularLocation>
        <location evidence="5">Host cell membrane</location>
        <topology evidence="2">Multi-pass membrane protein</topology>
    </subcellularLocation>
    <text evidence="4 5 7">At the ring and trophozoite stages, localizes to Maurer's clefts, specifically in the central region of the cleft (PubMed:24983235, PubMed:32184257). Localizes to the cell membrane of host erythrocyte infected with parasite mature forms (late trophozoite and schizont) (PubMed:27653778).</text>
</comment>
<comment type="developmental stage">
    <text evidence="4 5 7">Expressed during the asexual blood stage in late rings, trophozoites and schizonts (at protein level) (PubMed:24983235, PubMed:27653778, PubMed:32184257). Expressed in gametocytes (at protein level) (PubMed:27653778).</text>
</comment>
<comment type="domain">
    <text evidence="6">The first cytoplasmic domain binds ATP and nucleic acids such as RNA and DNA in vitro.</text>
</comment>
<comment type="domain">
    <text evidence="1 12">The P.falciparum Export Element (PEXEL) motif, also known as the vacuolar transport signal (VTS), is a pentameric sequence (RxLxE/Q/D) required for the translocation of proteins across the parasitophorous vacuole membrane (Probable). In the endoplasmic reticulum, the motif is cleaved after the leucine residue and the N-terminus is N-acetylated (By similarity).</text>
</comment>
<comment type="disruption phenotype">
    <text evidence="7">At the asexual blood stage, causes Maurer's cleft swelling and fragmentation, aberrant knob formation, with fewer and enlarged knobs, defective PfEMP1 trafficking characterized by impaired EMP1 surface expression and EMP1 accumulation at Maurer's clefts and a loss of adhesion of host infected erythrocytes to endothelial cell ligands (PubMed:32184257). Infected erythrocytes have decreased cellular rigidity and increased osmotic fragility (PubMed:32184257). Parasite growth is faster (PubMed:32184257).</text>
</comment>
<comment type="biotechnology">
    <text evidence="5">Potential vaccine candidate as CBP2-based peptides or antibodies against CBP2 prevent adhesion of infected erythrocytes to endothelial cells.</text>
</comment>
<proteinExistence type="evidence at protein level"/>
<protein>
    <recommendedName>
        <fullName evidence="9">CX3CL1-binding protein 2</fullName>
    </recommendedName>
    <alternativeName>
        <fullName evidence="10">Gametocyte exported protein 7</fullName>
        <shortName evidence="10">PfGEXP07</shortName>
    </alternativeName>
</protein>
<dbReference type="EMBL" id="AL844509">
    <property type="protein sequence ID" value="CAD52267.1"/>
    <property type="molecule type" value="Genomic_DNA"/>
</dbReference>
<dbReference type="RefSeq" id="XP_001349860.1">
    <property type="nucleotide sequence ID" value="XM_001349824.1"/>
</dbReference>
<dbReference type="SMR" id="Q8IEJ0"/>
<dbReference type="IntAct" id="Q8IEJ0">
    <property type="interactions" value="1"/>
</dbReference>
<dbReference type="PaxDb" id="5833-MAL13P1.61"/>
<dbReference type="EnsemblProtists" id="CAD52267">
    <property type="protein sequence ID" value="CAD52267"/>
    <property type="gene ID" value="PF3D7_1301700"/>
</dbReference>
<dbReference type="GeneID" id="813950"/>
<dbReference type="KEGG" id="pfa:PF3D7_1301700"/>
<dbReference type="VEuPathDB" id="PlasmoDB:PF3D7_1301700"/>
<dbReference type="HOGENOM" id="CLU_1144510_0_0_1"/>
<dbReference type="InParanoid" id="Q8IEJ0"/>
<dbReference type="OrthoDB" id="377482at2759"/>
<dbReference type="PhylomeDB" id="Q8IEJ0"/>
<dbReference type="Proteomes" id="UP000001450">
    <property type="component" value="Chromosome 13"/>
</dbReference>
<dbReference type="GO" id="GO:0020002">
    <property type="term" value="C:host cell plasma membrane"/>
    <property type="evidence" value="ECO:0000314"/>
    <property type="project" value="UniProtKB"/>
</dbReference>
<dbReference type="GO" id="GO:0020036">
    <property type="term" value="C:Maurer's cleft"/>
    <property type="evidence" value="ECO:0000314"/>
    <property type="project" value="UniProtKB"/>
</dbReference>
<dbReference type="GO" id="GO:0016020">
    <property type="term" value="C:membrane"/>
    <property type="evidence" value="ECO:0007669"/>
    <property type="project" value="UniProtKB-KW"/>
</dbReference>
<dbReference type="GO" id="GO:0005524">
    <property type="term" value="F:ATP binding"/>
    <property type="evidence" value="ECO:0000314"/>
    <property type="project" value="UniProtKB"/>
</dbReference>
<dbReference type="GO" id="GO:0003676">
    <property type="term" value="F:nucleic acid binding"/>
    <property type="evidence" value="ECO:0000314"/>
    <property type="project" value="UniProtKB"/>
</dbReference>
<dbReference type="GO" id="GO:0098609">
    <property type="term" value="P:cell-cell adhesion"/>
    <property type="evidence" value="ECO:0000314"/>
    <property type="project" value="UniProtKB"/>
</dbReference>
<dbReference type="GO" id="GO:1902115">
    <property type="term" value="P:regulation of organelle assembly"/>
    <property type="evidence" value="ECO:0000315"/>
    <property type="project" value="UniProtKB"/>
</dbReference>
<dbReference type="GO" id="GO:0090313">
    <property type="term" value="P:regulation of protein targeting to membrane"/>
    <property type="evidence" value="ECO:0000315"/>
    <property type="project" value="UniProtKB"/>
</dbReference>
<evidence type="ECO:0000250" key="1">
    <source>
        <dbReference type="UniProtKB" id="Q8I2D9"/>
    </source>
</evidence>
<evidence type="ECO:0000255" key="2"/>
<evidence type="ECO:0000256" key="3">
    <source>
        <dbReference type="SAM" id="MobiDB-lite"/>
    </source>
</evidence>
<evidence type="ECO:0000269" key="4">
    <source>
    </source>
</evidence>
<evidence type="ECO:0000269" key="5">
    <source>
    </source>
</evidence>
<evidence type="ECO:0000269" key="6">
    <source>
    </source>
</evidence>
<evidence type="ECO:0000269" key="7">
    <source>
    </source>
</evidence>
<evidence type="ECO:0000303" key="8">
    <source>
    </source>
</evidence>
<evidence type="ECO:0000303" key="9">
    <source>
    </source>
</evidence>
<evidence type="ECO:0000303" key="10">
    <source>
    </source>
</evidence>
<evidence type="ECO:0000305" key="11"/>
<evidence type="ECO:0000305" key="12">
    <source>
    </source>
</evidence>
<evidence type="ECO:0000312" key="13">
    <source>
        <dbReference type="EMBL" id="CAD52267.1"/>
    </source>
</evidence>
<evidence type="ECO:0000312" key="14">
    <source>
        <dbReference type="Proteomes" id="UP000001450"/>
    </source>
</evidence>
<name>GEX07_PLAF7</name>